<accession>Q2R1D5</accession>
<organism>
    <name type="scientific">Oryza sativa subsp. japonica</name>
    <name type="common">Rice</name>
    <dbReference type="NCBI Taxonomy" id="39947"/>
    <lineage>
        <taxon>Eukaryota</taxon>
        <taxon>Viridiplantae</taxon>
        <taxon>Streptophyta</taxon>
        <taxon>Embryophyta</taxon>
        <taxon>Tracheophyta</taxon>
        <taxon>Spermatophyta</taxon>
        <taxon>Magnoliopsida</taxon>
        <taxon>Liliopsida</taxon>
        <taxon>Poales</taxon>
        <taxon>Poaceae</taxon>
        <taxon>BOP clade</taxon>
        <taxon>Oryzoideae</taxon>
        <taxon>Oryzeae</taxon>
        <taxon>Oryzinae</taxon>
        <taxon>Oryza</taxon>
        <taxon>Oryza sativa</taxon>
    </lineage>
</organism>
<gene>
    <name type="primary">GF14H</name>
    <name type="ordered locus">Os11g0609600</name>
    <name type="ordered locus">LOC_Os11g39540</name>
</gene>
<feature type="chain" id="PRO_0000246069" description="Putative 14-3-3-like protein GF14-H">
    <location>
        <begin position="1"/>
        <end position="230"/>
    </location>
</feature>
<keyword id="KW-1185">Reference proteome</keyword>
<evidence type="ECO:0000250" key="1"/>
<evidence type="ECO:0000305" key="2"/>
<proteinExistence type="inferred from homology"/>
<dbReference type="EMBL" id="DP000010">
    <property type="protein sequence ID" value="ABA94733.1"/>
    <property type="molecule type" value="Genomic_DNA"/>
</dbReference>
<dbReference type="EMBL" id="AP008217">
    <property type="status" value="NOT_ANNOTATED_CDS"/>
    <property type="molecule type" value="Genomic_DNA"/>
</dbReference>
<dbReference type="EMBL" id="AP014967">
    <property type="status" value="NOT_ANNOTATED_CDS"/>
    <property type="molecule type" value="Genomic_DNA"/>
</dbReference>
<dbReference type="SMR" id="Q2R1D5"/>
<dbReference type="DIP" id="DIP-46492N"/>
<dbReference type="FunCoup" id="Q2R1D5">
    <property type="interactions" value="1"/>
</dbReference>
<dbReference type="IntAct" id="Q2R1D5">
    <property type="interactions" value="1"/>
</dbReference>
<dbReference type="STRING" id="39947.Q2R1D5"/>
<dbReference type="PaxDb" id="39947-Q2R1D5"/>
<dbReference type="InParanoid" id="Q2R1D5"/>
<dbReference type="PlantReactome" id="R-OSA-5632095">
    <property type="pathway name" value="Brassinosteroid signaling"/>
</dbReference>
<dbReference type="Proteomes" id="UP000000763">
    <property type="component" value="Chromosome 11"/>
</dbReference>
<dbReference type="Proteomes" id="UP000059680">
    <property type="component" value="Chromosome 11"/>
</dbReference>
<dbReference type="GO" id="GO:0005737">
    <property type="term" value="C:cytoplasm"/>
    <property type="evidence" value="ECO:0000318"/>
    <property type="project" value="GO_Central"/>
</dbReference>
<dbReference type="GO" id="GO:0008104">
    <property type="term" value="P:protein localization"/>
    <property type="evidence" value="ECO:0000318"/>
    <property type="project" value="GO_Central"/>
</dbReference>
<dbReference type="GO" id="GO:0007165">
    <property type="term" value="P:signal transduction"/>
    <property type="evidence" value="ECO:0000318"/>
    <property type="project" value="GO_Central"/>
</dbReference>
<dbReference type="Gene3D" id="1.20.190.20">
    <property type="entry name" value="14-3-3 domain"/>
    <property type="match status" value="1"/>
</dbReference>
<dbReference type="InterPro" id="IPR000308">
    <property type="entry name" value="14-3-3"/>
</dbReference>
<dbReference type="InterPro" id="IPR036815">
    <property type="entry name" value="14-3-3_dom_sf"/>
</dbReference>
<dbReference type="InterPro" id="IPR023410">
    <property type="entry name" value="14-3-3_domain"/>
</dbReference>
<dbReference type="PANTHER" id="PTHR18860">
    <property type="entry name" value="14-3-3 PROTEIN"/>
    <property type="match status" value="1"/>
</dbReference>
<dbReference type="Pfam" id="PF00244">
    <property type="entry name" value="14-3-3"/>
    <property type="match status" value="2"/>
</dbReference>
<dbReference type="PIRSF" id="PIRSF000868">
    <property type="entry name" value="14-3-3"/>
    <property type="match status" value="1"/>
</dbReference>
<dbReference type="PRINTS" id="PR00305">
    <property type="entry name" value="1433ZETA"/>
</dbReference>
<dbReference type="SMART" id="SM00101">
    <property type="entry name" value="14_3_3"/>
    <property type="match status" value="1"/>
</dbReference>
<dbReference type="SUPFAM" id="SSF48445">
    <property type="entry name" value="14-3-3 protein"/>
    <property type="match status" value="1"/>
</dbReference>
<reference key="1">
    <citation type="journal article" date="2005" name="BMC Biol.">
        <title>The sequence of rice chromosomes 11 and 12, rich in disease resistance genes and recent gene duplications.</title>
        <authorList>
            <consortium name="The rice chromosomes 11 and 12 sequencing consortia"/>
        </authorList>
    </citation>
    <scope>NUCLEOTIDE SEQUENCE [LARGE SCALE GENOMIC DNA]</scope>
    <source>
        <strain>cv. Nipponbare</strain>
    </source>
</reference>
<reference key="2">
    <citation type="journal article" date="2005" name="Nature">
        <title>The map-based sequence of the rice genome.</title>
        <authorList>
            <consortium name="International rice genome sequencing project (IRGSP)"/>
        </authorList>
    </citation>
    <scope>NUCLEOTIDE SEQUENCE [LARGE SCALE GENOMIC DNA]</scope>
    <source>
        <strain>cv. Nipponbare</strain>
    </source>
</reference>
<reference key="3">
    <citation type="journal article" date="2008" name="Nucleic Acids Res.">
        <title>The rice annotation project database (RAP-DB): 2008 update.</title>
        <authorList>
            <consortium name="The rice annotation project (RAP)"/>
        </authorList>
    </citation>
    <scope>GENOME REANNOTATION</scope>
    <source>
        <strain>cv. Nipponbare</strain>
    </source>
</reference>
<reference key="4">
    <citation type="journal article" date="2013" name="Rice">
        <title>Improvement of the Oryza sativa Nipponbare reference genome using next generation sequence and optical map data.</title>
        <authorList>
            <person name="Kawahara Y."/>
            <person name="de la Bastide M."/>
            <person name="Hamilton J.P."/>
            <person name="Kanamori H."/>
            <person name="McCombie W.R."/>
            <person name="Ouyang S."/>
            <person name="Schwartz D.C."/>
            <person name="Tanaka T."/>
            <person name="Wu J."/>
            <person name="Zhou S."/>
            <person name="Childs K.L."/>
            <person name="Davidson R.M."/>
            <person name="Lin H."/>
            <person name="Quesada-Ocampo L."/>
            <person name="Vaillancourt B."/>
            <person name="Sakai H."/>
            <person name="Lee S.S."/>
            <person name="Kim J."/>
            <person name="Numa H."/>
            <person name="Itoh T."/>
            <person name="Buell C.R."/>
            <person name="Matsumoto T."/>
        </authorList>
    </citation>
    <scope>GENOME REANNOTATION</scope>
    <source>
        <strain>cv. Nipponbare</strain>
    </source>
</reference>
<reference key="5">
    <citation type="journal article" date="2006" name="DNA Res.">
        <title>The rice 14-3-3 gene family and its involvement in responses to biotic and abiotic stress.</title>
        <authorList>
            <person name="Chen F."/>
            <person name="Li Q."/>
            <person name="Sun L."/>
            <person name="He Z."/>
        </authorList>
    </citation>
    <scope>NOMENCLATURE</scope>
</reference>
<name>14338_ORYSJ</name>
<sequence length="230" mass="25854">MKEREKVVRLAKLAEQAERYDDMVEFMKTLARMDVDMSAEERLLFSVGFKKTIGARRASWRILESLEQKVTAGDQPGVTINGYKKKVEDELRAVCNEVLSIIAIHCLPLANSGENVVFFYKMKGDYYRYLAEFSTGTEKKAATDQSLMAYQAWPCAQLFSLLEIMNSPERASQVAKQALDEATAEINSAGVEGYKDSMLMMQLLKENLALWTSELTGGETSKDDDVVMEG</sequence>
<comment type="function">
    <text evidence="1">Is associated with a DNA binding complex that binds to the G box, a well-characterized cis-acting DNA regulatory element found in plant genes.</text>
</comment>
<comment type="similarity">
    <text evidence="2">Belongs to the 14-3-3 family.</text>
</comment>
<protein>
    <recommendedName>
        <fullName>Putative 14-3-3-like protein GF14-H</fullName>
    </recommendedName>
    <alternativeName>
        <fullName>G-box factor 14-3-3 homolog H</fullName>
    </alternativeName>
</protein>